<keyword id="KW-1185">Reference proteome</keyword>
<keyword id="KW-0694">RNA-binding</keyword>
<keyword id="KW-0346">Stress response</keyword>
<protein>
    <recommendedName>
        <fullName evidence="1">RNA-binding protein Hfq</fullName>
    </recommendedName>
</protein>
<gene>
    <name evidence="1" type="primary">hfq</name>
    <name type="ordered locus">PST_3668</name>
</gene>
<proteinExistence type="inferred from homology"/>
<accession>A4VQP0</accession>
<name>HFQ_STUS1</name>
<evidence type="ECO:0000255" key="1">
    <source>
        <dbReference type="HAMAP-Rule" id="MF_00436"/>
    </source>
</evidence>
<evidence type="ECO:0000255" key="2">
    <source>
        <dbReference type="PROSITE-ProRule" id="PRU01346"/>
    </source>
</evidence>
<comment type="function">
    <text evidence="1">RNA chaperone that binds small regulatory RNA (sRNAs) and mRNAs to facilitate mRNA translational regulation in response to envelope stress, environmental stress and changes in metabolite concentrations. Also binds with high specificity to tRNAs.</text>
</comment>
<comment type="subunit">
    <text evidence="1">Homohexamer.</text>
</comment>
<comment type="similarity">
    <text evidence="1">Belongs to the Hfq family.</text>
</comment>
<reference key="1">
    <citation type="journal article" date="2008" name="Proc. Natl. Acad. Sci. U.S.A.">
        <title>Nitrogen fixation island and rhizosphere competence traits in the genome of root-associated Pseudomonas stutzeri A1501.</title>
        <authorList>
            <person name="Yan Y."/>
            <person name="Yang J."/>
            <person name="Dou Y."/>
            <person name="Chen M."/>
            <person name="Ping S."/>
            <person name="Peng J."/>
            <person name="Lu W."/>
            <person name="Zhang W."/>
            <person name="Yao Z."/>
            <person name="Li H."/>
            <person name="Liu W."/>
            <person name="He S."/>
            <person name="Geng L."/>
            <person name="Zhang X."/>
            <person name="Yang F."/>
            <person name="Yu H."/>
            <person name="Zhan Y."/>
            <person name="Li D."/>
            <person name="Lin Z."/>
            <person name="Wang Y."/>
            <person name="Elmerich C."/>
            <person name="Lin M."/>
            <person name="Jin Q."/>
        </authorList>
    </citation>
    <scope>NUCLEOTIDE SEQUENCE [LARGE SCALE GENOMIC DNA]</scope>
    <source>
        <strain>A1501</strain>
    </source>
</reference>
<sequence length="84" mass="9312">MSKGHSLQDPYLNTLRKERVPVSIYLVNGIKLQGQIESFDQFVILLKNTVSQMVYKHAISTVVPGRPVRLPTAGDAEQSESGND</sequence>
<dbReference type="EMBL" id="CP000304">
    <property type="protein sequence ID" value="ABP81291.1"/>
    <property type="molecule type" value="Genomic_DNA"/>
</dbReference>
<dbReference type="RefSeq" id="WP_003283098.1">
    <property type="nucleotide sequence ID" value="NC_009434.1"/>
</dbReference>
<dbReference type="SMR" id="A4VQP0"/>
<dbReference type="GeneID" id="77258958"/>
<dbReference type="KEGG" id="psa:PST_3668"/>
<dbReference type="eggNOG" id="COG1923">
    <property type="taxonomic scope" value="Bacteria"/>
</dbReference>
<dbReference type="HOGENOM" id="CLU_113688_2_2_6"/>
<dbReference type="Proteomes" id="UP000000233">
    <property type="component" value="Chromosome"/>
</dbReference>
<dbReference type="GO" id="GO:0005829">
    <property type="term" value="C:cytosol"/>
    <property type="evidence" value="ECO:0007669"/>
    <property type="project" value="TreeGrafter"/>
</dbReference>
<dbReference type="GO" id="GO:0003723">
    <property type="term" value="F:RNA binding"/>
    <property type="evidence" value="ECO:0007669"/>
    <property type="project" value="UniProtKB-UniRule"/>
</dbReference>
<dbReference type="GO" id="GO:0006355">
    <property type="term" value="P:regulation of DNA-templated transcription"/>
    <property type="evidence" value="ECO:0007669"/>
    <property type="project" value="InterPro"/>
</dbReference>
<dbReference type="GO" id="GO:0043487">
    <property type="term" value="P:regulation of RNA stability"/>
    <property type="evidence" value="ECO:0007669"/>
    <property type="project" value="TreeGrafter"/>
</dbReference>
<dbReference type="GO" id="GO:0045974">
    <property type="term" value="P:regulation of translation, ncRNA-mediated"/>
    <property type="evidence" value="ECO:0007669"/>
    <property type="project" value="TreeGrafter"/>
</dbReference>
<dbReference type="CDD" id="cd01716">
    <property type="entry name" value="Hfq"/>
    <property type="match status" value="1"/>
</dbReference>
<dbReference type="FunFam" id="2.30.30.100:FF:000001">
    <property type="entry name" value="RNA-binding protein Hfq"/>
    <property type="match status" value="1"/>
</dbReference>
<dbReference type="Gene3D" id="2.30.30.100">
    <property type="match status" value="1"/>
</dbReference>
<dbReference type="HAMAP" id="MF_00436">
    <property type="entry name" value="Hfq"/>
    <property type="match status" value="1"/>
</dbReference>
<dbReference type="InterPro" id="IPR005001">
    <property type="entry name" value="Hfq"/>
</dbReference>
<dbReference type="InterPro" id="IPR010920">
    <property type="entry name" value="LSM_dom_sf"/>
</dbReference>
<dbReference type="InterPro" id="IPR047575">
    <property type="entry name" value="Sm"/>
</dbReference>
<dbReference type="NCBIfam" id="TIGR02383">
    <property type="entry name" value="Hfq"/>
    <property type="match status" value="1"/>
</dbReference>
<dbReference type="NCBIfam" id="NF001602">
    <property type="entry name" value="PRK00395.1"/>
    <property type="match status" value="1"/>
</dbReference>
<dbReference type="PANTHER" id="PTHR34772">
    <property type="entry name" value="RNA-BINDING PROTEIN HFQ"/>
    <property type="match status" value="1"/>
</dbReference>
<dbReference type="PANTHER" id="PTHR34772:SF1">
    <property type="entry name" value="RNA-BINDING PROTEIN HFQ"/>
    <property type="match status" value="1"/>
</dbReference>
<dbReference type="Pfam" id="PF17209">
    <property type="entry name" value="Hfq"/>
    <property type="match status" value="1"/>
</dbReference>
<dbReference type="SUPFAM" id="SSF50182">
    <property type="entry name" value="Sm-like ribonucleoproteins"/>
    <property type="match status" value="1"/>
</dbReference>
<dbReference type="PROSITE" id="PS52002">
    <property type="entry name" value="SM"/>
    <property type="match status" value="1"/>
</dbReference>
<organism>
    <name type="scientific">Stutzerimonas stutzeri (strain A1501)</name>
    <name type="common">Pseudomonas stutzeri</name>
    <dbReference type="NCBI Taxonomy" id="379731"/>
    <lineage>
        <taxon>Bacteria</taxon>
        <taxon>Pseudomonadati</taxon>
        <taxon>Pseudomonadota</taxon>
        <taxon>Gammaproteobacteria</taxon>
        <taxon>Pseudomonadales</taxon>
        <taxon>Pseudomonadaceae</taxon>
        <taxon>Stutzerimonas</taxon>
    </lineage>
</organism>
<feature type="chain" id="PRO_1000025929" description="RNA-binding protein Hfq">
    <location>
        <begin position="1"/>
        <end position="84"/>
    </location>
</feature>
<feature type="domain" description="Sm" evidence="2">
    <location>
        <begin position="9"/>
        <end position="68"/>
    </location>
</feature>